<proteinExistence type="inferred from homology"/>
<organismHost>
    <name type="scientific">Aves</name>
    <dbReference type="NCBI Taxonomy" id="8782"/>
</organismHost>
<organismHost>
    <name type="scientific">Homo sapiens</name>
    <name type="common">Human</name>
    <dbReference type="NCBI Taxonomy" id="9606"/>
</organismHost>
<organismHost>
    <name type="scientific">Sus scrofa</name>
    <name type="common">Pig</name>
    <dbReference type="NCBI Taxonomy" id="9823"/>
</organismHost>
<comment type="function">
    <text evidence="1">Mediates the nuclear export of encapsidated genomic RNAs (ribonucleoproteins, RNPs). Acts as an adapter between viral RNPs complexes and the nuclear export machinery of the cell. Possesses no intrinsic RNA-binding activity, but includes a C-terminal M1-binding domain. This domain is believed to allow recognition of RNPs bound to the protein M1. Since protein M1 is not available in large quantities before late stages of infection, such an indirect recognition mechanism probably ensures that genomic RNPs are not exported from the host nucleus until sufficient quantities of viral mRNA and progeny genomic RNA have been synthesized. Furthermore, the RNPs enter the host cytoplasm only when associated with the M1 protein that is necessary to guide them to the plasma membrane. May down-regulate viral RNA synthesis when overproduced.</text>
</comment>
<comment type="subunit">
    <text evidence="1">Interacts with protein M1. May interact with host nucleoporin RAB/HRB and exportin XPO1/CRM1.</text>
</comment>
<comment type="subcellular location">
    <subcellularLocation>
        <location evidence="1">Virion</location>
    </subcellularLocation>
    <subcellularLocation>
        <location evidence="1">Host nucleus</location>
    </subcellularLocation>
</comment>
<comment type="alternative products">
    <event type="alternative splicing"/>
    <isoform>
        <id>Q77IX1-1</id>
        <name>NEP</name>
        <name>NS2</name>
        <sequence type="displayed"/>
    </isoform>
    <isoform>
        <id>Q99AU3-1</id>
        <name>NS1</name>
        <sequence type="external"/>
    </isoform>
</comment>
<comment type="miscellaneous">
    <text>Average number present in a viral particle is estimated to be 130-200 molecules.</text>
</comment>
<comment type="miscellaneous">
    <text>South Carolina isolate has been sequenced from formalid fixed-lung tissues of a 21-year-old male which died in 1918 at Ft. Jackson, SC. Brevig Mission isolate has been sequenced from lung tissues of an Inuit woman buried in the permafrost in a gravesite near Brevig Mission, Alaska. This sample was recovered by John Hultin, retired pathologist.</text>
</comment>
<comment type="similarity">
    <text evidence="1">Belongs to the influenza viruses NEP family.</text>
</comment>
<dbReference type="EMBL" id="AF333238">
    <property type="protein sequence ID" value="AAK14369.1"/>
    <property type="molecule type" value="Genomic_RNA"/>
</dbReference>
<dbReference type="SMR" id="Q77IX1"/>
<dbReference type="Proteomes" id="UP000008430">
    <property type="component" value="Genome"/>
</dbReference>
<dbReference type="GO" id="GO:0042025">
    <property type="term" value="C:host cell nucleus"/>
    <property type="evidence" value="ECO:0007669"/>
    <property type="project" value="UniProtKB-SubCell"/>
</dbReference>
<dbReference type="GO" id="GO:0044423">
    <property type="term" value="C:virion component"/>
    <property type="evidence" value="ECO:0007669"/>
    <property type="project" value="UniProtKB-UniRule"/>
</dbReference>
<dbReference type="GO" id="GO:0039675">
    <property type="term" value="P:exit of virus from host cell nucleus through nuclear pore"/>
    <property type="evidence" value="ECO:0007669"/>
    <property type="project" value="UniProtKB-UniRule"/>
</dbReference>
<dbReference type="Gene3D" id="1.10.287.230">
    <property type="match status" value="1"/>
</dbReference>
<dbReference type="Gene3D" id="1.10.287.10">
    <property type="entry name" value="S15/NS1, RNA-binding"/>
    <property type="match status" value="1"/>
</dbReference>
<dbReference type="HAMAP" id="MF_04067">
    <property type="entry name" value="INFV_NEP"/>
    <property type="match status" value="1"/>
</dbReference>
<dbReference type="InterPro" id="IPR000968">
    <property type="entry name" value="Flu_NS2"/>
</dbReference>
<dbReference type="Pfam" id="PF00601">
    <property type="entry name" value="Flu_NS2"/>
    <property type="match status" value="1"/>
</dbReference>
<dbReference type="SUPFAM" id="SSF101156">
    <property type="entry name" value="Nonstructural protein ns2, Nep, M1-binding domain"/>
    <property type="match status" value="1"/>
</dbReference>
<evidence type="ECO:0000255" key="1">
    <source>
        <dbReference type="HAMAP-Rule" id="MF_04067"/>
    </source>
</evidence>
<feature type="chain" id="PRO_0000310568" description="Nuclear export protein">
    <location>
        <begin position="1"/>
        <end position="121"/>
    </location>
</feature>
<feature type="short sequence motif" description="Nuclear export signal" evidence="1">
    <location>
        <begin position="12"/>
        <end position="21"/>
    </location>
</feature>
<feature type="short sequence motif" description="Nuclear export signal" evidence="1">
    <location>
        <begin position="85"/>
        <end position="94"/>
    </location>
</feature>
<protein>
    <recommendedName>
        <fullName evidence="1">Nuclear export protein</fullName>
        <shortName evidence="1">NEP</shortName>
    </recommendedName>
    <alternativeName>
        <fullName evidence="1">Non-structural protein 2</fullName>
        <shortName evidence="1">NS2</shortName>
    </alternativeName>
</protein>
<reference key="1">
    <citation type="journal article" date="2001" name="Proc. Natl. Acad. Sci. U.S.A.">
        <title>Sequence of the 1918 pandemic influenza virus nonstructural gene (NS) segment and characterization of recombinant viruses bearing the 1918 NS genes.</title>
        <authorList>
            <person name="Basler C.F."/>
            <person name="Reid A.H."/>
            <person name="Dybing J.K."/>
            <person name="Janczewski T.A."/>
            <person name="Fanning T.G."/>
            <person name="Zheng H."/>
            <person name="Salvatore M."/>
            <person name="Perdue M.L."/>
            <person name="Swayne D.E."/>
            <person name="Garcia-Sastre A."/>
            <person name="Palese P."/>
            <person name="Taubenberger J.K."/>
        </authorList>
    </citation>
    <scope>NUCLEOTIDE SEQUENCE [GENOMIC RNA]</scope>
</reference>
<gene>
    <name evidence="1" type="primary">NS</name>
</gene>
<accession>Q77IX1</accession>
<organism>
    <name type="scientific">Influenza A virus (strain A/Brevig Mission/1/1918 H1N1)</name>
    <name type="common">Influenza A virus (strain A/South Carolina/1/1918 H1N1)</name>
    <dbReference type="NCBI Taxonomy" id="88776"/>
    <lineage>
        <taxon>Viruses</taxon>
        <taxon>Riboviria</taxon>
        <taxon>Orthornavirae</taxon>
        <taxon>Negarnaviricota</taxon>
        <taxon>Polyploviricotina</taxon>
        <taxon>Insthoviricetes</taxon>
        <taxon>Articulavirales</taxon>
        <taxon>Orthomyxoviridae</taxon>
        <taxon>Alphainfluenzavirus</taxon>
        <taxon>Alphainfluenzavirus influenzae</taxon>
        <taxon>Influenza A virus</taxon>
    </lineage>
</organism>
<sequence length="121" mass="14365">MDSNTVSSFQDILMRMSKMQLGSSSEDLNGMITQFESLKLYRDSLGEAVMRMGDLHSLQNRNGKWREQLSQKFEEIRWLIEEVRHRLKITENSFEQITFMQALQLLLEVEQEIRTFSFQLI</sequence>
<keyword id="KW-0025">Alternative splicing</keyword>
<keyword id="KW-1048">Host nucleus</keyword>
<keyword id="KW-0945">Host-virus interaction</keyword>
<keyword id="KW-0813">Transport</keyword>
<keyword id="KW-0946">Virion</keyword>
<name>NEP_I18A0</name>